<reference key="1">
    <citation type="journal article" date="1999" name="Virology">
        <title>The complete genome sequence of PM2, the first lipid-containing bacterial virus to be isolated.</title>
        <authorList>
            <person name="Maennistoe R.H."/>
            <person name="Kivelae H.M."/>
            <person name="Paulin L."/>
            <person name="Bamford D.H."/>
            <person name="Bamford J.K."/>
        </authorList>
    </citation>
    <scope>NUCLEOTIDE SEQUENCE [GENOMIC DNA]</scope>
</reference>
<reference key="2">
    <citation type="journal article" date="1999" name="Virology">
        <title>Purification and protein composition of PM2, the first lipid-containing bacterial virus to be isolated.</title>
        <authorList>
            <person name="Kivelae H.M."/>
            <person name="Maennistoe R.H."/>
            <person name="Kalkkinen N."/>
            <person name="Bamford D.H."/>
        </authorList>
    </citation>
    <scope>PROTEIN SEQUENCE OF 2-11</scope>
</reference>
<reference key="3">
    <citation type="journal article" date="2002" name="J. Virol.">
        <title>Bacteriophage PM2 has a protein capsid surrounding a spherical proteinaceous lipid core.</title>
        <authorList>
            <person name="Kivelae H.M."/>
            <person name="Kalkkinen N."/>
            <person name="Bamford D.H."/>
        </authorList>
    </citation>
    <scope>SUBCELLULAR LOCATION</scope>
</reference>
<reference evidence="4" key="4">
    <citation type="journal article" date="2008" name="Mol. Cell">
        <title>Insights into virus evolution and membrane biogenesis from the structure of the marine lipid-containing bacteriophage PM2.</title>
        <authorList>
            <person name="Abrescia N.G."/>
            <person name="Grimes J.M."/>
            <person name="Kivela H.M."/>
            <person name="Assenberg R."/>
            <person name="Sutton G.C."/>
            <person name="Butcher S.J."/>
            <person name="Bamford J.K."/>
            <person name="Bamford D.H."/>
            <person name="Stuart D.I."/>
        </authorList>
    </citation>
    <scope>X-RAY CRYSTALLOGRAPHY (7.00 ANGSTROMS)</scope>
    <scope>SUBCELLULAR LOCATION</scope>
</reference>
<proteinExistence type="evidence at protein level"/>
<name>P6_BPPM2</name>
<gene>
    <name type="primary">VI</name>
</gene>
<evidence type="ECO:0000269" key="1">
    <source>
    </source>
</evidence>
<evidence type="ECO:0000305" key="2">
    <source>
    </source>
</evidence>
<evidence type="ECO:0000305" key="3">
    <source>
    </source>
</evidence>
<evidence type="ECO:0007744" key="4">
    <source>
        <dbReference type="PDB" id="2W0C"/>
    </source>
</evidence>
<sequence>MANFLTKNFVWILAAGVGVWFYQKADNAAKTATKPIADFLAELQFLVNGSNYVKFPNAGFVLTRDALQDDFIAYDDRIKAWLGTHDRHKDFLAEILDHERRVKPVYRKLIGNIIDASTIRAASGVEL</sequence>
<organismHost>
    <name type="scientific">Pseudoalteromonas espejiana</name>
    <dbReference type="NCBI Taxonomy" id="28107"/>
</organismHost>
<organism>
    <name type="scientific">Pseudoalteromonas phage PM2</name>
    <name type="common">Bacteriophage PM2</name>
    <dbReference type="NCBI Taxonomy" id="2905728"/>
    <lineage>
        <taxon>Viruses</taxon>
        <taxon>Varidnaviria</taxon>
        <taxon>Bamfordvirae</taxon>
        <taxon>Preplasmiviricota</taxon>
        <taxon>Tectiliviricetes</taxon>
        <taxon>Vinavirales</taxon>
        <taxon>Corticoviridae</taxon>
        <taxon>Corticovirus</taxon>
        <taxon>Corticovirus PM2</taxon>
    </lineage>
</organism>
<protein>
    <recommendedName>
        <fullName>Protein P6</fullName>
    </recommendedName>
    <alternativeName>
        <fullName>Protein VI</fullName>
    </alternativeName>
</protein>
<comment type="subcellular location">
    <subcellularLocation>
        <location evidence="2">Virion membrane</location>
    </subcellularLocation>
    <text evidence="3">Part of the capsid inner membrane.</text>
</comment>
<accession>Q9XJR1</accession>
<feature type="initiator methionine" description="Removed" evidence="1">
    <location>
        <position position="1"/>
    </location>
</feature>
<feature type="chain" id="PRO_0000339903" description="Protein P6">
    <location>
        <begin position="2"/>
        <end position="127"/>
    </location>
</feature>
<dbReference type="EMBL" id="AF155037">
    <property type="protein sequence ID" value="AAD43556.1"/>
    <property type="molecule type" value="Genomic_DNA"/>
</dbReference>
<dbReference type="RefSeq" id="NP_049910.1">
    <property type="nucleotide sequence ID" value="NC_000867.1"/>
</dbReference>
<dbReference type="PDB" id="2W0C">
    <property type="method" value="X-ray"/>
    <property type="resolution" value="7.00 A"/>
    <property type="chains" value="T=1-127"/>
</dbReference>
<dbReference type="PDBsum" id="2W0C"/>
<dbReference type="SMR" id="Q9XJR1"/>
<dbReference type="KEGG" id="vg:1262028"/>
<dbReference type="Proteomes" id="UP000002136">
    <property type="component" value="Genome"/>
</dbReference>
<dbReference type="GO" id="GO:0016020">
    <property type="term" value="C:membrane"/>
    <property type="evidence" value="ECO:0007669"/>
    <property type="project" value="UniProtKB-KW"/>
</dbReference>
<dbReference type="GO" id="GO:0039641">
    <property type="term" value="C:viral inner membrane"/>
    <property type="evidence" value="ECO:0007669"/>
    <property type="project" value="UniProtKB-KW"/>
</dbReference>
<dbReference type="GO" id="GO:0055036">
    <property type="term" value="C:virion membrane"/>
    <property type="evidence" value="ECO:0000314"/>
    <property type="project" value="CACAO"/>
</dbReference>
<keyword id="KW-0002">3D-structure</keyword>
<keyword id="KW-1231">Capsid inner membrane protein</keyword>
<keyword id="KW-0903">Direct protein sequencing</keyword>
<keyword id="KW-0472">Membrane</keyword>
<keyword id="KW-1185">Reference proteome</keyword>
<keyword id="KW-0946">Virion</keyword>